<gene>
    <name type="ORF">ZK550.6</name>
</gene>
<evidence type="ECO:0000250" key="1"/>
<evidence type="ECO:0000305" key="2"/>
<keyword id="KW-0223">Dioxygenase</keyword>
<keyword id="KW-0408">Iron</keyword>
<keyword id="KW-0479">Metal-binding</keyword>
<keyword id="KW-0560">Oxidoreductase</keyword>
<keyword id="KW-1185">Reference proteome</keyword>
<keyword id="KW-0847">Vitamin C</keyword>
<sequence length="312" mass="35720">MLGKGVVDYTREGSILSAEQRRFYEKNGYLLIRNCVPQYELNRFRQRFQDICEKKVKAPENMTVMKDISIAKSEFKDGEKAITKIQDFADDPVLFEYCKYPGVVDVVKDLIGNPKSNLMAMHTMLINKPPDNGKLTSRHPMHQDLQYFPFRPADFICCAWTAMEKITRANGCLVVVPGTHKGVLLPHEYPKWEGGVNKAYHGIQDYDTSTPRIHVEMEPGDTVFFHPILIHGSGANRTEGFRKAISCHYANDDLCRYVNVEGTTQETLAEEIIEIAKKRLTRYGLDPNTVTLDFADIWRVRAREVNGRRSNL</sequence>
<feature type="chain" id="PRO_0000215231" description="Probable phytanoyl-CoA dioxygenase">
    <location>
        <begin position="1"/>
        <end position="312"/>
    </location>
</feature>
<feature type="binding site" evidence="1">
    <location>
        <position position="84"/>
    </location>
    <ligand>
        <name>2-oxoglutarate</name>
        <dbReference type="ChEBI" id="CHEBI:16810"/>
    </ligand>
</feature>
<feature type="binding site" evidence="1">
    <location>
        <position position="124"/>
    </location>
    <ligand>
        <name>2-oxoglutarate</name>
        <dbReference type="ChEBI" id="CHEBI:16810"/>
    </ligand>
</feature>
<feature type="binding site" evidence="1">
    <location>
        <begin position="142"/>
        <end position="144"/>
    </location>
    <ligand>
        <name>2-oxoglutarate</name>
        <dbReference type="ChEBI" id="CHEBI:16810"/>
    </ligand>
</feature>
<feature type="binding site" evidence="1">
    <location>
        <position position="142"/>
    </location>
    <ligand>
        <name>Fe cation</name>
        <dbReference type="ChEBI" id="CHEBI:24875"/>
    </ligand>
</feature>
<feature type="binding site" evidence="1">
    <location>
        <position position="144"/>
    </location>
    <ligand>
        <name>Fe cation</name>
        <dbReference type="ChEBI" id="CHEBI:24875"/>
    </ligand>
</feature>
<feature type="binding site" evidence="1">
    <location>
        <position position="160"/>
    </location>
    <ligand>
        <name>2-oxoglutarate</name>
        <dbReference type="ChEBI" id="CHEBI:16810"/>
    </ligand>
</feature>
<feature type="binding site" evidence="1">
    <location>
        <position position="231"/>
    </location>
    <ligand>
        <name>Fe cation</name>
        <dbReference type="ChEBI" id="CHEBI:24875"/>
    </ligand>
</feature>
<feature type="binding site" evidence="1">
    <location>
        <position position="233"/>
    </location>
    <ligand>
        <name>2-oxoglutarate</name>
        <dbReference type="ChEBI" id="CHEBI:16810"/>
    </ligand>
</feature>
<feature type="binding site" evidence="1">
    <location>
        <position position="242"/>
    </location>
    <ligand>
        <name>2-oxoglutarate</name>
        <dbReference type="ChEBI" id="CHEBI:16810"/>
    </ligand>
</feature>
<comment type="function">
    <text>Converts phytanoyl-CoA to 2-hydroxyphytanoyl-CoA.</text>
</comment>
<comment type="catalytic activity">
    <reaction>
        <text>phytanoyl-CoA + 2-oxoglutarate + O2 = 2-hydroxyphytanoyl-CoA + succinate + CO2</text>
        <dbReference type="Rhea" id="RHEA:16065"/>
        <dbReference type="ChEBI" id="CHEBI:15379"/>
        <dbReference type="ChEBI" id="CHEBI:16526"/>
        <dbReference type="ChEBI" id="CHEBI:16810"/>
        <dbReference type="ChEBI" id="CHEBI:30031"/>
        <dbReference type="ChEBI" id="CHEBI:57334"/>
        <dbReference type="ChEBI" id="CHEBI:57391"/>
        <dbReference type="EC" id="1.14.11.18"/>
    </reaction>
</comment>
<comment type="cofactor">
    <cofactor evidence="1">
        <name>Fe cation</name>
        <dbReference type="ChEBI" id="CHEBI:24875"/>
    </cofactor>
</comment>
<comment type="cofactor">
    <cofactor evidence="1">
        <name>L-ascorbate</name>
        <dbReference type="ChEBI" id="CHEBI:38290"/>
    </cofactor>
</comment>
<comment type="pathway">
    <text>Lipid metabolism; fatty acid metabolism.</text>
</comment>
<comment type="similarity">
    <text evidence="2">Belongs to the PhyH family.</text>
</comment>
<protein>
    <recommendedName>
        <fullName>Probable phytanoyl-CoA dioxygenase</fullName>
        <ecNumber>1.14.11.18</ecNumber>
    </recommendedName>
    <alternativeName>
        <fullName>Phytanic acid oxidase</fullName>
    </alternativeName>
    <alternativeName>
        <fullName>Phytanoyl-CoA alpha-hydroxylase</fullName>
        <shortName>PhyH</shortName>
    </alternativeName>
</protein>
<dbReference type="EC" id="1.14.11.18"/>
<dbReference type="EMBL" id="Z82287">
    <property type="protein sequence ID" value="CAB05318.1"/>
    <property type="molecule type" value="Genomic_DNA"/>
</dbReference>
<dbReference type="EMBL" id="Z80223">
    <property type="protein sequence ID" value="CAB05318.1"/>
    <property type="status" value="JOINED"/>
    <property type="molecule type" value="Genomic_DNA"/>
</dbReference>
<dbReference type="PIR" id="T21397">
    <property type="entry name" value="T21397"/>
</dbReference>
<dbReference type="RefSeq" id="NP_503062.1">
    <property type="nucleotide sequence ID" value="NM_070661.6"/>
</dbReference>
<dbReference type="SMR" id="O62515"/>
<dbReference type="BioGRID" id="43579">
    <property type="interactions" value="16"/>
</dbReference>
<dbReference type="FunCoup" id="O62515">
    <property type="interactions" value="360"/>
</dbReference>
<dbReference type="STRING" id="6239.ZK550.6.1"/>
<dbReference type="PaxDb" id="6239-ZK550.6"/>
<dbReference type="PeptideAtlas" id="O62515"/>
<dbReference type="EnsemblMetazoa" id="ZK550.6.1">
    <property type="protein sequence ID" value="ZK550.6.1"/>
    <property type="gene ID" value="WBGene00014000"/>
</dbReference>
<dbReference type="GeneID" id="178503"/>
<dbReference type="KEGG" id="cel:CELE_ZK550.6"/>
<dbReference type="UCSC" id="ZK550.6.1">
    <property type="organism name" value="c. elegans"/>
</dbReference>
<dbReference type="AGR" id="WB:WBGene00014000"/>
<dbReference type="CTD" id="178503"/>
<dbReference type="WormBase" id="ZK550.6">
    <property type="protein sequence ID" value="CE20432"/>
    <property type="gene ID" value="WBGene00014000"/>
</dbReference>
<dbReference type="eggNOG" id="KOG3290">
    <property type="taxonomic scope" value="Eukaryota"/>
</dbReference>
<dbReference type="GeneTree" id="ENSGT00390000001775"/>
<dbReference type="HOGENOM" id="CLU_060877_0_0_1"/>
<dbReference type="InParanoid" id="O62515"/>
<dbReference type="OMA" id="CCAWTAM"/>
<dbReference type="OrthoDB" id="2328924at2759"/>
<dbReference type="PhylomeDB" id="O62515"/>
<dbReference type="Reactome" id="R-CEL-389599">
    <property type="pathway name" value="Alpha-oxidation of phytanate"/>
</dbReference>
<dbReference type="UniPathway" id="UPA00199"/>
<dbReference type="PRO" id="PR:O62515"/>
<dbReference type="Proteomes" id="UP000001940">
    <property type="component" value="Chromosome IV"/>
</dbReference>
<dbReference type="Bgee" id="WBGene00014000">
    <property type="expression patterns" value="Expressed in larva and 3 other cell types or tissues"/>
</dbReference>
<dbReference type="GO" id="GO:0031418">
    <property type="term" value="F:L-ascorbic acid binding"/>
    <property type="evidence" value="ECO:0007669"/>
    <property type="project" value="UniProtKB-KW"/>
</dbReference>
<dbReference type="GO" id="GO:0046872">
    <property type="term" value="F:metal ion binding"/>
    <property type="evidence" value="ECO:0007669"/>
    <property type="project" value="UniProtKB-KW"/>
</dbReference>
<dbReference type="GO" id="GO:0048244">
    <property type="term" value="F:phytanoyl-CoA dioxygenase activity"/>
    <property type="evidence" value="ECO:0000318"/>
    <property type="project" value="GO_Central"/>
</dbReference>
<dbReference type="GO" id="GO:0001561">
    <property type="term" value="P:fatty acid alpha-oxidation"/>
    <property type="evidence" value="ECO:0000318"/>
    <property type="project" value="GO_Central"/>
</dbReference>
<dbReference type="FunFam" id="2.60.120.620:FF:000012">
    <property type="entry name" value="Phytanoyl-CoA dioxygenase, peroxisomal"/>
    <property type="match status" value="1"/>
</dbReference>
<dbReference type="Gene3D" id="2.60.120.620">
    <property type="entry name" value="q2cbj1_9rhob like domain"/>
    <property type="match status" value="1"/>
</dbReference>
<dbReference type="InterPro" id="IPR047128">
    <property type="entry name" value="PhyH"/>
</dbReference>
<dbReference type="InterPro" id="IPR008775">
    <property type="entry name" value="Phytyl_CoA_dOase-like"/>
</dbReference>
<dbReference type="PANTHER" id="PTHR21308">
    <property type="entry name" value="PHYTANOYL-COA ALPHA-HYDROXYLASE"/>
    <property type="match status" value="1"/>
</dbReference>
<dbReference type="PANTHER" id="PTHR21308:SF1">
    <property type="entry name" value="PHYTANOYL-COA DIOXYGENASE, PEROXISOMAL"/>
    <property type="match status" value="1"/>
</dbReference>
<dbReference type="Pfam" id="PF05721">
    <property type="entry name" value="PhyH"/>
    <property type="match status" value="1"/>
</dbReference>
<dbReference type="SUPFAM" id="SSF51197">
    <property type="entry name" value="Clavaminate synthase-like"/>
    <property type="match status" value="1"/>
</dbReference>
<reference key="1">
    <citation type="journal article" date="1998" name="Science">
        <title>Genome sequence of the nematode C. elegans: a platform for investigating biology.</title>
        <authorList>
            <consortium name="The C. elegans sequencing consortium"/>
        </authorList>
    </citation>
    <scope>NUCLEOTIDE SEQUENCE [LARGE SCALE GENOMIC DNA]</scope>
    <source>
        <strain>Bristol N2</strain>
    </source>
</reference>
<name>PAHX_CAEEL</name>
<accession>O62515</accession>
<organism>
    <name type="scientific">Caenorhabditis elegans</name>
    <dbReference type="NCBI Taxonomy" id="6239"/>
    <lineage>
        <taxon>Eukaryota</taxon>
        <taxon>Metazoa</taxon>
        <taxon>Ecdysozoa</taxon>
        <taxon>Nematoda</taxon>
        <taxon>Chromadorea</taxon>
        <taxon>Rhabditida</taxon>
        <taxon>Rhabditina</taxon>
        <taxon>Rhabditomorpha</taxon>
        <taxon>Rhabditoidea</taxon>
        <taxon>Rhabditidae</taxon>
        <taxon>Peloderinae</taxon>
        <taxon>Caenorhabditis</taxon>
    </lineage>
</organism>
<proteinExistence type="inferred from homology"/>